<proteinExistence type="evidence at protein level"/>
<dbReference type="PIR" id="A01953">
    <property type="entry name" value="KVRB38"/>
</dbReference>
<dbReference type="FunCoup" id="P01690">
    <property type="interactions" value="212"/>
</dbReference>
<dbReference type="InParanoid" id="P01690"/>
<dbReference type="Proteomes" id="UP000001811">
    <property type="component" value="Unplaced"/>
</dbReference>
<dbReference type="GO" id="GO:0019814">
    <property type="term" value="C:immunoglobulin complex"/>
    <property type="evidence" value="ECO:0007669"/>
    <property type="project" value="UniProtKB-KW"/>
</dbReference>
<dbReference type="GO" id="GO:0002250">
    <property type="term" value="P:adaptive immune response"/>
    <property type="evidence" value="ECO:0007669"/>
    <property type="project" value="UniProtKB-KW"/>
</dbReference>
<dbReference type="FunFam" id="2.60.40.10:FF:000212">
    <property type="entry name" value="Immunoglobulin kappa chain variable 12-38"/>
    <property type="match status" value="1"/>
</dbReference>
<dbReference type="Gene3D" id="2.60.40.10">
    <property type="entry name" value="Immunoglobulins"/>
    <property type="match status" value="1"/>
</dbReference>
<dbReference type="InterPro" id="IPR007110">
    <property type="entry name" value="Ig-like_dom"/>
</dbReference>
<dbReference type="InterPro" id="IPR036179">
    <property type="entry name" value="Ig-like_dom_sf"/>
</dbReference>
<dbReference type="InterPro" id="IPR013783">
    <property type="entry name" value="Ig-like_fold"/>
</dbReference>
<dbReference type="InterPro" id="IPR013106">
    <property type="entry name" value="Ig_V-set"/>
</dbReference>
<dbReference type="InterPro" id="IPR050150">
    <property type="entry name" value="IgV_Light_Chain"/>
</dbReference>
<dbReference type="PANTHER" id="PTHR23267">
    <property type="entry name" value="IMMUNOGLOBULIN LIGHT CHAIN"/>
    <property type="match status" value="1"/>
</dbReference>
<dbReference type="Pfam" id="PF07686">
    <property type="entry name" value="V-set"/>
    <property type="match status" value="1"/>
</dbReference>
<dbReference type="SMART" id="SM00406">
    <property type="entry name" value="IGv"/>
    <property type="match status" value="1"/>
</dbReference>
<dbReference type="SUPFAM" id="SSF48726">
    <property type="entry name" value="Immunoglobulin"/>
    <property type="match status" value="1"/>
</dbReference>
<dbReference type="PROSITE" id="PS50835">
    <property type="entry name" value="IG_LIKE"/>
    <property type="match status" value="1"/>
</dbReference>
<name>KV09_RABIT</name>
<sequence length="92" mass="9731">AFELTQTPASVEAAVGGTVTINCQASESISNWLAWYQQKPGQPXKLLIYKASTLASGVSSRFKGSGSGTQFTLTISDLECADAATYYCQSTD</sequence>
<accession>P01690</accession>
<organism>
    <name type="scientific">Oryctolagus cuniculus</name>
    <name type="common">Rabbit</name>
    <dbReference type="NCBI Taxonomy" id="9986"/>
    <lineage>
        <taxon>Eukaryota</taxon>
        <taxon>Metazoa</taxon>
        <taxon>Chordata</taxon>
        <taxon>Craniata</taxon>
        <taxon>Vertebrata</taxon>
        <taxon>Euteleostomi</taxon>
        <taxon>Mammalia</taxon>
        <taxon>Eutheria</taxon>
        <taxon>Euarchontoglires</taxon>
        <taxon>Glires</taxon>
        <taxon>Lagomorpha</taxon>
        <taxon>Leporidae</taxon>
        <taxon>Oryctolagus</taxon>
    </lineage>
</organism>
<protein>
    <recommendedName>
        <fullName>Ig kappa chain V region 3381</fullName>
    </recommendedName>
</protein>
<comment type="miscellaneous">
    <text>This chain was obtained from antibody to type III pneumococci and was isolated from the serum of a single rabbit.</text>
</comment>
<reference key="1">
    <citation type="journal article" date="1975" name="Proc. Natl. Acad. Sci. U.S.A.">
        <title>Diversity of light chain variable region sequences among rabbit antibodies elicited by the same antigens.</title>
        <authorList>
            <person name="Margolies M.N."/>
            <person name="Cannon L.E. III"/>
            <person name="Strosberg A.D."/>
            <person name="Haber E."/>
        </authorList>
    </citation>
    <scope>PROTEIN SEQUENCE</scope>
</reference>
<feature type="chain" id="PRO_0000059728" description="Ig kappa chain V region 3381">
    <location>
        <begin position="1"/>
        <end position="92" status="greater than"/>
    </location>
</feature>
<feature type="region of interest" description="Framework-1">
    <location>
        <begin position="1"/>
        <end position="23"/>
    </location>
</feature>
<feature type="region of interest" description="Complementarity-determining-1">
    <location>
        <begin position="24"/>
        <end position="34"/>
    </location>
</feature>
<feature type="region of interest" description="Framework-2">
    <location>
        <begin position="35"/>
        <end position="49"/>
    </location>
</feature>
<feature type="region of interest" description="Complementarity-determining-2">
    <location>
        <begin position="50"/>
        <end position="56"/>
    </location>
</feature>
<feature type="region of interest" description="Framework-3">
    <location>
        <begin position="57"/>
        <end position="88"/>
    </location>
</feature>
<feature type="region of interest" description="Complementarity-determining-3">
    <location>
        <begin position="89"/>
        <end position="92" status="greater than"/>
    </location>
</feature>
<feature type="non-terminal residue">
    <location>
        <position position="92"/>
    </location>
</feature>
<keyword id="KW-1064">Adaptive immunity</keyword>
<keyword id="KW-0903">Direct protein sequencing</keyword>
<keyword id="KW-0391">Immunity</keyword>
<keyword id="KW-1280">Immunoglobulin</keyword>
<keyword id="KW-1185">Reference proteome</keyword>